<accession>Q8PUM6</accession>
<proteinExistence type="inferred from homology"/>
<keyword id="KW-0028">Amino-acid biosynthesis</keyword>
<keyword id="KW-0055">Arginine biosynthesis</keyword>
<keyword id="KW-0963">Cytoplasm</keyword>
<keyword id="KW-0456">Lyase</keyword>
<evidence type="ECO:0000255" key="1">
    <source>
        <dbReference type="HAMAP-Rule" id="MF_00006"/>
    </source>
</evidence>
<reference key="1">
    <citation type="journal article" date="2002" name="J. Mol. Microbiol. Biotechnol.">
        <title>The genome of Methanosarcina mazei: evidence for lateral gene transfer between Bacteria and Archaea.</title>
        <authorList>
            <person name="Deppenmeier U."/>
            <person name="Johann A."/>
            <person name="Hartsch T."/>
            <person name="Merkl R."/>
            <person name="Schmitz R.A."/>
            <person name="Martinez-Arias R."/>
            <person name="Henne A."/>
            <person name="Wiezer A."/>
            <person name="Baeumer S."/>
            <person name="Jacobi C."/>
            <person name="Brueggemann H."/>
            <person name="Lienard T."/>
            <person name="Christmann A."/>
            <person name="Boemecke M."/>
            <person name="Steckel S."/>
            <person name="Bhattacharyya A."/>
            <person name="Lykidis A."/>
            <person name="Overbeek R."/>
            <person name="Klenk H.-P."/>
            <person name="Gunsalus R.P."/>
            <person name="Fritz H.-J."/>
            <person name="Gottschalk G."/>
        </authorList>
    </citation>
    <scope>NUCLEOTIDE SEQUENCE [LARGE SCALE GENOMIC DNA]</scope>
    <source>
        <strain>ATCC BAA-159 / DSM 3647 / Goe1 / Go1 / JCM 11833 / OCM 88</strain>
    </source>
</reference>
<sequence length="491" mass="54946">MSNILRRGRLEAAQDEEILRYTSSMEADRWIFNADIVVDLAHTVMLREQGIIKEEDCSKILSGLLKIREEGMEKLDFSYEDIHISLESRLIDMVGEDVGGRMHSGRSRNDEVATCIRLTLREELLGLLEEIFALRKTLVSLAEKHSETLMPGFTHLQHAQPTTLAHHLCAHESALGRDFDRVQDAFSRVNLCPLGAAAFASTGFNLNRKRTQELLGFEGLLENSMDAVSSRDFLIECASVFSNLMINLSRIAEELVIWSSSEFNFIELDDMYASTSSIMPQKKNPDTAELMRGKTGVSVGALMSLLTICKGLPLSYNRDLQEATPNIWRSVETVRASVRVMEGMVKTMKVHPDVLAAESITGFTTATELADTFVRETGIPFRTAHQIVGMLAKEREKPTMEKIDSASEVVLGESLSSKGLTENMVKEALNPESNIKRRKIPGGPAPEEMKNYLSKRKTELELNAQEIATLKDIIDSAFENLLSVVEEYRKI</sequence>
<comment type="catalytic activity">
    <reaction evidence="1">
        <text>2-(N(omega)-L-arginino)succinate = fumarate + L-arginine</text>
        <dbReference type="Rhea" id="RHEA:24020"/>
        <dbReference type="ChEBI" id="CHEBI:29806"/>
        <dbReference type="ChEBI" id="CHEBI:32682"/>
        <dbReference type="ChEBI" id="CHEBI:57472"/>
        <dbReference type="EC" id="4.3.2.1"/>
    </reaction>
</comment>
<comment type="pathway">
    <text evidence="1">Amino-acid biosynthesis; L-arginine biosynthesis; L-arginine from L-ornithine and carbamoyl phosphate: step 3/3.</text>
</comment>
<comment type="subcellular location">
    <subcellularLocation>
        <location evidence="1">Cytoplasm</location>
    </subcellularLocation>
</comment>
<comment type="similarity">
    <text evidence="1">Belongs to the lyase 1 family. Argininosuccinate lyase subfamily.</text>
</comment>
<dbReference type="EC" id="4.3.2.1" evidence="1"/>
<dbReference type="EMBL" id="AE008384">
    <property type="protein sequence ID" value="AAM32003.1"/>
    <property type="molecule type" value="Genomic_DNA"/>
</dbReference>
<dbReference type="RefSeq" id="WP_011034231.1">
    <property type="nucleotide sequence ID" value="NC_003901.1"/>
</dbReference>
<dbReference type="SMR" id="Q8PUM6"/>
<dbReference type="GeneID" id="82161380"/>
<dbReference type="KEGG" id="mma:MM_2307"/>
<dbReference type="PATRIC" id="fig|192952.21.peg.2643"/>
<dbReference type="eggNOG" id="arCOG01748">
    <property type="taxonomic scope" value="Archaea"/>
</dbReference>
<dbReference type="HOGENOM" id="CLU_027272_2_3_2"/>
<dbReference type="UniPathway" id="UPA00068">
    <property type="reaction ID" value="UER00114"/>
</dbReference>
<dbReference type="Proteomes" id="UP000000595">
    <property type="component" value="Chromosome"/>
</dbReference>
<dbReference type="GO" id="GO:0005829">
    <property type="term" value="C:cytosol"/>
    <property type="evidence" value="ECO:0007669"/>
    <property type="project" value="TreeGrafter"/>
</dbReference>
<dbReference type="GO" id="GO:0004056">
    <property type="term" value="F:argininosuccinate lyase activity"/>
    <property type="evidence" value="ECO:0007669"/>
    <property type="project" value="UniProtKB-UniRule"/>
</dbReference>
<dbReference type="GO" id="GO:0042450">
    <property type="term" value="P:arginine biosynthetic process via ornithine"/>
    <property type="evidence" value="ECO:0007669"/>
    <property type="project" value="InterPro"/>
</dbReference>
<dbReference type="GO" id="GO:0006526">
    <property type="term" value="P:L-arginine biosynthetic process"/>
    <property type="evidence" value="ECO:0007669"/>
    <property type="project" value="UniProtKB-UniRule"/>
</dbReference>
<dbReference type="CDD" id="cd01359">
    <property type="entry name" value="Argininosuccinate_lyase"/>
    <property type="match status" value="1"/>
</dbReference>
<dbReference type="FunFam" id="1.10.40.30:FF:000001">
    <property type="entry name" value="Argininosuccinate lyase"/>
    <property type="match status" value="1"/>
</dbReference>
<dbReference type="FunFam" id="1.20.200.10:FF:000015">
    <property type="entry name" value="argininosuccinate lyase isoform X2"/>
    <property type="match status" value="1"/>
</dbReference>
<dbReference type="Gene3D" id="1.10.40.30">
    <property type="entry name" value="Fumarase/aspartase (C-terminal domain)"/>
    <property type="match status" value="1"/>
</dbReference>
<dbReference type="Gene3D" id="1.20.200.10">
    <property type="entry name" value="Fumarase/aspartase (Central domain)"/>
    <property type="match status" value="1"/>
</dbReference>
<dbReference type="Gene3D" id="1.10.275.10">
    <property type="entry name" value="Fumarase/aspartase (N-terminal domain)"/>
    <property type="match status" value="1"/>
</dbReference>
<dbReference type="HAMAP" id="MF_00006">
    <property type="entry name" value="Arg_succ_lyase"/>
    <property type="match status" value="1"/>
</dbReference>
<dbReference type="InterPro" id="IPR029419">
    <property type="entry name" value="Arg_succ_lyase_C"/>
</dbReference>
<dbReference type="InterPro" id="IPR009049">
    <property type="entry name" value="Argininosuccinate_lyase"/>
</dbReference>
<dbReference type="InterPro" id="IPR024083">
    <property type="entry name" value="Fumarase/histidase_N"/>
</dbReference>
<dbReference type="InterPro" id="IPR000362">
    <property type="entry name" value="Fumarate_lyase_fam"/>
</dbReference>
<dbReference type="InterPro" id="IPR022761">
    <property type="entry name" value="Fumarate_lyase_N"/>
</dbReference>
<dbReference type="InterPro" id="IPR008948">
    <property type="entry name" value="L-Aspartase-like"/>
</dbReference>
<dbReference type="NCBIfam" id="TIGR00838">
    <property type="entry name" value="argH"/>
    <property type="match status" value="1"/>
</dbReference>
<dbReference type="PANTHER" id="PTHR43814">
    <property type="entry name" value="ARGININOSUCCINATE LYASE"/>
    <property type="match status" value="1"/>
</dbReference>
<dbReference type="PANTHER" id="PTHR43814:SF1">
    <property type="entry name" value="ARGININOSUCCINATE LYASE"/>
    <property type="match status" value="1"/>
</dbReference>
<dbReference type="Pfam" id="PF14698">
    <property type="entry name" value="ASL_C2"/>
    <property type="match status" value="1"/>
</dbReference>
<dbReference type="Pfam" id="PF00206">
    <property type="entry name" value="Lyase_1"/>
    <property type="match status" value="1"/>
</dbReference>
<dbReference type="PRINTS" id="PR00145">
    <property type="entry name" value="ARGSUCLYASE"/>
</dbReference>
<dbReference type="PRINTS" id="PR00149">
    <property type="entry name" value="FUMRATELYASE"/>
</dbReference>
<dbReference type="SUPFAM" id="SSF48557">
    <property type="entry name" value="L-aspartase-like"/>
    <property type="match status" value="1"/>
</dbReference>
<organism>
    <name type="scientific">Methanosarcina mazei (strain ATCC BAA-159 / DSM 3647 / Goe1 / Go1 / JCM 11833 / OCM 88)</name>
    <name type="common">Methanosarcina frisia</name>
    <dbReference type="NCBI Taxonomy" id="192952"/>
    <lineage>
        <taxon>Archaea</taxon>
        <taxon>Methanobacteriati</taxon>
        <taxon>Methanobacteriota</taxon>
        <taxon>Stenosarchaea group</taxon>
        <taxon>Methanomicrobia</taxon>
        <taxon>Methanosarcinales</taxon>
        <taxon>Methanosarcinaceae</taxon>
        <taxon>Methanosarcina</taxon>
    </lineage>
</organism>
<gene>
    <name evidence="1" type="primary">argH</name>
    <name type="ordered locus">MM_2307</name>
</gene>
<name>ARLY_METMA</name>
<protein>
    <recommendedName>
        <fullName evidence="1">Argininosuccinate lyase</fullName>
        <shortName evidence="1">ASAL</shortName>
        <ecNumber evidence="1">4.3.2.1</ecNumber>
    </recommendedName>
    <alternativeName>
        <fullName evidence="1">Arginosuccinase</fullName>
    </alternativeName>
</protein>
<feature type="chain" id="PRO_0000137864" description="Argininosuccinate lyase">
    <location>
        <begin position="1"/>
        <end position="491"/>
    </location>
</feature>